<dbReference type="EMBL" id="L16960">
    <property type="protein sequence ID" value="AAA22466.1"/>
    <property type="molecule type" value="Genomic_DNA"/>
</dbReference>
<dbReference type="EMBL" id="AL009126">
    <property type="protein sequence ID" value="CAB15597.2"/>
    <property type="molecule type" value="Genomic_DNA"/>
</dbReference>
<dbReference type="PIR" id="I39855">
    <property type="entry name" value="I39855"/>
</dbReference>
<dbReference type="RefSeq" id="NP_391461.2">
    <property type="nucleotide sequence ID" value="NC_000964.3"/>
</dbReference>
<dbReference type="RefSeq" id="WP_003243291.1">
    <property type="nucleotide sequence ID" value="NZ_OZ025638.1"/>
</dbReference>
<dbReference type="SMR" id="P39569"/>
<dbReference type="FunCoup" id="P39569">
    <property type="interactions" value="39"/>
</dbReference>
<dbReference type="STRING" id="224308.BSU35800"/>
<dbReference type="TCDB" id="1.A.134.1.2">
    <property type="family name" value="the nutrient-sensing ion-conducting pore-forming-geraa (nip-geraa) family"/>
</dbReference>
<dbReference type="PaxDb" id="224308-BSU35800"/>
<dbReference type="EnsemblBacteria" id="CAB15597">
    <property type="protein sequence ID" value="CAB15597"/>
    <property type="gene ID" value="BSU_35800"/>
</dbReference>
<dbReference type="GeneID" id="936814"/>
<dbReference type="KEGG" id="bsu:BSU35800"/>
<dbReference type="PATRIC" id="fig|224308.179.peg.3876"/>
<dbReference type="eggNOG" id="COG0697">
    <property type="taxonomic scope" value="Bacteria"/>
</dbReference>
<dbReference type="InParanoid" id="P39569"/>
<dbReference type="OrthoDB" id="9772630at2"/>
<dbReference type="PhylomeDB" id="P39569"/>
<dbReference type="BioCyc" id="BSUB:BSU35800-MONOMER"/>
<dbReference type="Proteomes" id="UP000001570">
    <property type="component" value="Chromosome"/>
</dbReference>
<dbReference type="GO" id="GO:0005886">
    <property type="term" value="C:plasma membrane"/>
    <property type="evidence" value="ECO:0007669"/>
    <property type="project" value="UniProtKB-SubCell"/>
</dbReference>
<dbReference type="GO" id="GO:0009847">
    <property type="term" value="P:spore germination"/>
    <property type="evidence" value="ECO:0007669"/>
    <property type="project" value="InterPro"/>
</dbReference>
<dbReference type="InterPro" id="IPR004995">
    <property type="entry name" value="Spore_Ger"/>
</dbReference>
<dbReference type="InterPro" id="IPR050768">
    <property type="entry name" value="UPF0353/GerABKA_families"/>
</dbReference>
<dbReference type="PANTHER" id="PTHR22550:SF5">
    <property type="entry name" value="LEUCINE ZIPPER PROTEIN 4"/>
    <property type="match status" value="1"/>
</dbReference>
<dbReference type="PANTHER" id="PTHR22550">
    <property type="entry name" value="SPORE GERMINATION PROTEIN"/>
    <property type="match status" value="1"/>
</dbReference>
<dbReference type="Pfam" id="PF03323">
    <property type="entry name" value="GerA"/>
    <property type="match status" value="1"/>
</dbReference>
<dbReference type="PIRSF" id="PIRSF005690">
    <property type="entry name" value="GerBA"/>
    <property type="match status" value="1"/>
</dbReference>
<evidence type="ECO:0000255" key="1"/>
<evidence type="ECO:0000305" key="2"/>
<comment type="function">
    <text>Involved in the response to the germinative mixture of L-asparagine, glucose, fructose and potassium ions (AGFK). Cannot stimulate germination in the absence of gerD and gerK gene products (fructose and glucose receptors respectively).</text>
</comment>
<comment type="subcellular location">
    <subcellularLocation>
        <location evidence="2">Cell membrane</location>
        <topology evidence="2">Multi-pass membrane protein</topology>
    </subcellularLocation>
</comment>
<comment type="developmental stage">
    <text>Expressed in the forespore compartment of the developing sporangium.</text>
</comment>
<comment type="similarity">
    <text evidence="2">Belongs to the GerABKA family.</text>
</comment>
<organism>
    <name type="scientific">Bacillus subtilis (strain 168)</name>
    <dbReference type="NCBI Taxonomy" id="224308"/>
    <lineage>
        <taxon>Bacteria</taxon>
        <taxon>Bacillati</taxon>
        <taxon>Bacillota</taxon>
        <taxon>Bacilli</taxon>
        <taxon>Bacillales</taxon>
        <taxon>Bacillaceae</taxon>
        <taxon>Bacillus</taxon>
    </lineage>
</organism>
<accession>P39569</accession>
<sequence>MQIDSDLQNNLDTLKKTLGQNDDMMFYTFAFGDSRQKACLLYIDGLTENKMLAQYVISPLQKEALAHKECSIEDLSAFFFGFHHSVVSTMKEIEQLVFSGQAILLADGYRGGLAFDTKSVATRSLDEPSSEVVERGPKIGFIEKLRTNTALLRERTSDPNLVIKEMTLGKRTKKKIAVAYIQDIAPDYVVKEVFKRLKSVNIDNLPESGTLEQLIEDEPFSIFPTILSTERPDRVESSLLEGRVSILVDGTPFALIVPATVDEFIHSPDDYSQRWIPMSLVRLLRYSSILITIYLPGLYISLVSFHTGLLPTRMAISIAGSRLNVPFPPFVEAFIMIFTIELIREAGLRLPKPIGQTIGLIGGVVIGQAAVQAQIVSALMVIVVSVTALASFTVPSYAYNFPLRIIRIGVMISATALGMYGVIMVYLFVIGHLMRLKSFGQDYIIPIMAQPGQDLKDTVIRIPTMFLKRRPTRNDPEDNIRQR</sequence>
<protein>
    <recommendedName>
        <fullName>Spore germination protein B1</fullName>
    </recommendedName>
</protein>
<name>GERBA_BACSU</name>
<reference key="1">
    <citation type="journal article" date="1994" name="Microbiology">
        <title>The gerB region of the Bacillus subtilis 168 chromosome encodes a homologue of the gerA spore germination operon.</title>
        <authorList>
            <person name="Corfe B.M."/>
            <person name="Sammons R.L."/>
            <person name="Smith D.A."/>
            <person name="Maueel C."/>
        </authorList>
    </citation>
    <scope>NUCLEOTIDE SEQUENCE [GENOMIC DNA]</scope>
    <source>
        <strain>168</strain>
    </source>
</reference>
<reference key="2">
    <citation type="journal article" date="1997" name="Nature">
        <title>The complete genome sequence of the Gram-positive bacterium Bacillus subtilis.</title>
        <authorList>
            <person name="Kunst F."/>
            <person name="Ogasawara N."/>
            <person name="Moszer I."/>
            <person name="Albertini A.M."/>
            <person name="Alloni G."/>
            <person name="Azevedo V."/>
            <person name="Bertero M.G."/>
            <person name="Bessieres P."/>
            <person name="Bolotin A."/>
            <person name="Borchert S."/>
            <person name="Borriss R."/>
            <person name="Boursier L."/>
            <person name="Brans A."/>
            <person name="Braun M."/>
            <person name="Brignell S.C."/>
            <person name="Bron S."/>
            <person name="Brouillet S."/>
            <person name="Bruschi C.V."/>
            <person name="Caldwell B."/>
            <person name="Capuano V."/>
            <person name="Carter N.M."/>
            <person name="Choi S.-K."/>
            <person name="Codani J.-J."/>
            <person name="Connerton I.F."/>
            <person name="Cummings N.J."/>
            <person name="Daniel R.A."/>
            <person name="Denizot F."/>
            <person name="Devine K.M."/>
            <person name="Duesterhoeft A."/>
            <person name="Ehrlich S.D."/>
            <person name="Emmerson P.T."/>
            <person name="Entian K.-D."/>
            <person name="Errington J."/>
            <person name="Fabret C."/>
            <person name="Ferrari E."/>
            <person name="Foulger D."/>
            <person name="Fritz C."/>
            <person name="Fujita M."/>
            <person name="Fujita Y."/>
            <person name="Fuma S."/>
            <person name="Galizzi A."/>
            <person name="Galleron N."/>
            <person name="Ghim S.-Y."/>
            <person name="Glaser P."/>
            <person name="Goffeau A."/>
            <person name="Golightly E.J."/>
            <person name="Grandi G."/>
            <person name="Guiseppi G."/>
            <person name="Guy B.J."/>
            <person name="Haga K."/>
            <person name="Haiech J."/>
            <person name="Harwood C.R."/>
            <person name="Henaut A."/>
            <person name="Hilbert H."/>
            <person name="Holsappel S."/>
            <person name="Hosono S."/>
            <person name="Hullo M.-F."/>
            <person name="Itaya M."/>
            <person name="Jones L.-M."/>
            <person name="Joris B."/>
            <person name="Karamata D."/>
            <person name="Kasahara Y."/>
            <person name="Klaerr-Blanchard M."/>
            <person name="Klein C."/>
            <person name="Kobayashi Y."/>
            <person name="Koetter P."/>
            <person name="Koningstein G."/>
            <person name="Krogh S."/>
            <person name="Kumano M."/>
            <person name="Kurita K."/>
            <person name="Lapidus A."/>
            <person name="Lardinois S."/>
            <person name="Lauber J."/>
            <person name="Lazarevic V."/>
            <person name="Lee S.-M."/>
            <person name="Levine A."/>
            <person name="Liu H."/>
            <person name="Masuda S."/>
            <person name="Mauel C."/>
            <person name="Medigue C."/>
            <person name="Medina N."/>
            <person name="Mellado R.P."/>
            <person name="Mizuno M."/>
            <person name="Moestl D."/>
            <person name="Nakai S."/>
            <person name="Noback M."/>
            <person name="Noone D."/>
            <person name="O'Reilly M."/>
            <person name="Ogawa K."/>
            <person name="Ogiwara A."/>
            <person name="Oudega B."/>
            <person name="Park S.-H."/>
            <person name="Parro V."/>
            <person name="Pohl T.M."/>
            <person name="Portetelle D."/>
            <person name="Porwollik S."/>
            <person name="Prescott A.M."/>
            <person name="Presecan E."/>
            <person name="Pujic P."/>
            <person name="Purnelle B."/>
            <person name="Rapoport G."/>
            <person name="Rey M."/>
            <person name="Reynolds S."/>
            <person name="Rieger M."/>
            <person name="Rivolta C."/>
            <person name="Rocha E."/>
            <person name="Roche B."/>
            <person name="Rose M."/>
            <person name="Sadaie Y."/>
            <person name="Sato T."/>
            <person name="Scanlan E."/>
            <person name="Schleich S."/>
            <person name="Schroeter R."/>
            <person name="Scoffone F."/>
            <person name="Sekiguchi J."/>
            <person name="Sekowska A."/>
            <person name="Seror S.J."/>
            <person name="Serror P."/>
            <person name="Shin B.-S."/>
            <person name="Soldo B."/>
            <person name="Sorokin A."/>
            <person name="Tacconi E."/>
            <person name="Takagi T."/>
            <person name="Takahashi H."/>
            <person name="Takemaru K."/>
            <person name="Takeuchi M."/>
            <person name="Tamakoshi A."/>
            <person name="Tanaka T."/>
            <person name="Terpstra P."/>
            <person name="Tognoni A."/>
            <person name="Tosato V."/>
            <person name="Uchiyama S."/>
            <person name="Vandenbol M."/>
            <person name="Vannier F."/>
            <person name="Vassarotti A."/>
            <person name="Viari A."/>
            <person name="Wambutt R."/>
            <person name="Wedler E."/>
            <person name="Wedler H."/>
            <person name="Weitzenegger T."/>
            <person name="Winters P."/>
            <person name="Wipat A."/>
            <person name="Yamamoto H."/>
            <person name="Yamane K."/>
            <person name="Yasumoto K."/>
            <person name="Yata K."/>
            <person name="Yoshida K."/>
            <person name="Yoshikawa H.-F."/>
            <person name="Zumstein E."/>
            <person name="Yoshikawa H."/>
            <person name="Danchin A."/>
        </authorList>
    </citation>
    <scope>NUCLEOTIDE SEQUENCE [LARGE SCALE GENOMIC DNA]</scope>
    <source>
        <strain>168</strain>
    </source>
</reference>
<reference key="3">
    <citation type="journal article" date="2009" name="Microbiology">
        <title>From a consortium sequence to a unified sequence: the Bacillus subtilis 168 reference genome a decade later.</title>
        <authorList>
            <person name="Barbe V."/>
            <person name="Cruveiller S."/>
            <person name="Kunst F."/>
            <person name="Lenoble P."/>
            <person name="Meurice G."/>
            <person name="Sekowska A."/>
            <person name="Vallenet D."/>
            <person name="Wang T."/>
            <person name="Moszer I."/>
            <person name="Medigue C."/>
            <person name="Danchin A."/>
        </authorList>
    </citation>
    <scope>SEQUENCE REVISION TO 439-448</scope>
</reference>
<gene>
    <name type="primary">gerBA</name>
    <name type="ordered locus">BSU35800</name>
</gene>
<feature type="chain" id="PRO_0000164015" description="Spore germination protein B1">
    <location>
        <begin position="1"/>
        <end position="483"/>
    </location>
</feature>
<feature type="transmembrane region" description="Helical" evidence="1">
    <location>
        <begin position="289"/>
        <end position="309"/>
    </location>
</feature>
<feature type="transmembrane region" description="Helical" evidence="1">
    <location>
        <begin position="323"/>
        <end position="343"/>
    </location>
</feature>
<feature type="transmembrane region" description="Helical" evidence="1">
    <location>
        <begin position="353"/>
        <end position="373"/>
    </location>
</feature>
<feature type="transmembrane region" description="Helical" evidence="1">
    <location>
        <begin position="375"/>
        <end position="395"/>
    </location>
</feature>
<feature type="transmembrane region" description="Helical" evidence="1">
    <location>
        <begin position="410"/>
        <end position="430"/>
    </location>
</feature>
<feature type="sequence conflict" description="In Ref. 1; AAA22466." evidence="2" ref="1">
    <original>FGQDYIIPIM</original>
    <variation>LARITLSDH</variation>
    <location>
        <begin position="439"/>
        <end position="448"/>
    </location>
</feature>
<proteinExistence type="evidence at transcript level"/>
<keyword id="KW-1003">Cell membrane</keyword>
<keyword id="KW-0309">Germination</keyword>
<keyword id="KW-0472">Membrane</keyword>
<keyword id="KW-1185">Reference proteome</keyword>
<keyword id="KW-0812">Transmembrane</keyword>
<keyword id="KW-1133">Transmembrane helix</keyword>